<geneLocation type="plasmid">
    <name>pSMED01</name>
</geneLocation>
<gene>
    <name type="primary">cbbA</name>
    <name type="ordered locus">Smed_3923</name>
</gene>
<reference key="1">
    <citation type="submission" date="1999-12" db="EMBL/GenBank/DDBJ databases">
        <title>Genetic regulation of C1 metabolism in Sinorhizobium meliloti.</title>
        <authorList>
            <person name="Fenner B.J."/>
            <person name="Tiwari R.P."/>
            <person name="Dilworth M.J."/>
        </authorList>
    </citation>
    <scope>NUCLEOTIDE SEQUENCE [GENOMIC DNA]</scope>
</reference>
<reference key="2">
    <citation type="submission" date="2007-06" db="EMBL/GenBank/DDBJ databases">
        <title>Complete sequence of Sinorhizobium medicae WSM419 plasmid pSMED01.</title>
        <authorList>
            <consortium name="US DOE Joint Genome Institute"/>
            <person name="Copeland A."/>
            <person name="Lucas S."/>
            <person name="Lapidus A."/>
            <person name="Barry K."/>
            <person name="Glavina del Rio T."/>
            <person name="Dalin E."/>
            <person name="Tice H."/>
            <person name="Pitluck S."/>
            <person name="Chain P."/>
            <person name="Malfatti S."/>
            <person name="Shin M."/>
            <person name="Vergez L."/>
            <person name="Schmutz J."/>
            <person name="Larimer F."/>
            <person name="Land M."/>
            <person name="Hauser L."/>
            <person name="Kyrpides N."/>
            <person name="Mikhailova N."/>
            <person name="Reeve W.G."/>
            <person name="Richardson P."/>
        </authorList>
    </citation>
    <scope>NUCLEOTIDE SEQUENCE [LARGE SCALE GENOMIC DNA]</scope>
    <source>
        <strain>WSM419</strain>
    </source>
</reference>
<comment type="function">
    <text evidence="1">Catalyzes the aldol condensation of dihydroxyacetone phosphate (DHAP or glycerone-phosphate) with glyceraldehyde 3-phosphate (G3P) to form fructose 1,6-bisphosphate (FBP) in gluconeogenesis and the reverse reaction in glycolysis.</text>
</comment>
<comment type="catalytic activity">
    <reaction>
        <text>beta-D-fructose 1,6-bisphosphate = D-glyceraldehyde 3-phosphate + dihydroxyacetone phosphate</text>
        <dbReference type="Rhea" id="RHEA:14729"/>
        <dbReference type="ChEBI" id="CHEBI:32966"/>
        <dbReference type="ChEBI" id="CHEBI:57642"/>
        <dbReference type="ChEBI" id="CHEBI:59776"/>
        <dbReference type="EC" id="4.1.2.13"/>
    </reaction>
</comment>
<comment type="cofactor">
    <cofactor evidence="1">
        <name>Zn(2+)</name>
        <dbReference type="ChEBI" id="CHEBI:29105"/>
    </cofactor>
    <text evidence="1">Binds 2 Zn(2+) ions per subunit. One is catalytic and the other provides a structural contribution.</text>
</comment>
<comment type="pathway">
    <text>Carbohydrate biosynthesis; Calvin cycle.</text>
</comment>
<comment type="pathway">
    <text>Carbohydrate degradation; glycolysis; D-glyceraldehyde 3-phosphate and glycerone phosphate from D-glucose: step 4/4.</text>
</comment>
<comment type="subunit">
    <text evidence="1">Homodimer.</text>
</comment>
<comment type="similarity">
    <text evidence="2">Belongs to the class II fructose-bisphosphate aldolase family.</text>
</comment>
<comment type="sequence caution" evidence="2">
    <conflict type="frameshift">
        <sequence resource="EMBL-CDS" id="AAF25378"/>
    </conflict>
</comment>
<evidence type="ECO:0000250" key="1"/>
<evidence type="ECO:0000305" key="2"/>
<organism>
    <name type="scientific">Sinorhizobium medicae (strain WSM419)</name>
    <name type="common">Ensifer medicae</name>
    <dbReference type="NCBI Taxonomy" id="366394"/>
    <lineage>
        <taxon>Bacteria</taxon>
        <taxon>Pseudomonadati</taxon>
        <taxon>Pseudomonadota</taxon>
        <taxon>Alphaproteobacteria</taxon>
        <taxon>Hyphomicrobiales</taxon>
        <taxon>Rhizobiaceae</taxon>
        <taxon>Sinorhizobium/Ensifer group</taxon>
        <taxon>Sinorhizobium</taxon>
    </lineage>
</organism>
<proteinExistence type="inferred from homology"/>
<keyword id="KW-0113">Calvin cycle</keyword>
<keyword id="KW-0324">Glycolysis</keyword>
<keyword id="KW-0456">Lyase</keyword>
<keyword id="KW-0479">Metal-binding</keyword>
<keyword id="KW-0614">Plasmid</keyword>
<keyword id="KW-0862">Zinc</keyword>
<dbReference type="EC" id="4.1.2.13"/>
<dbReference type="EMBL" id="AF211846">
    <property type="protein sequence ID" value="AAF25378.1"/>
    <property type="status" value="ALT_FRAME"/>
    <property type="molecule type" value="Genomic_DNA"/>
</dbReference>
<dbReference type="EMBL" id="CP000739">
    <property type="protein sequence ID" value="ABR62733.1"/>
    <property type="molecule type" value="Genomic_DNA"/>
</dbReference>
<dbReference type="RefSeq" id="YP_001312666.1">
    <property type="nucleotide sequence ID" value="NC_009620.1"/>
</dbReference>
<dbReference type="SMR" id="P56888"/>
<dbReference type="KEGG" id="smd:Smed_3923"/>
<dbReference type="PATRIC" id="fig|366394.8.peg.369"/>
<dbReference type="HOGENOM" id="CLU_040088_0_0_5"/>
<dbReference type="OrthoDB" id="9803995at2"/>
<dbReference type="UniPathway" id="UPA00109">
    <property type="reaction ID" value="UER00183"/>
</dbReference>
<dbReference type="UniPathway" id="UPA00116"/>
<dbReference type="Proteomes" id="UP000001108">
    <property type="component" value="Plasmid pSMED01"/>
</dbReference>
<dbReference type="GO" id="GO:0004332">
    <property type="term" value="F:fructose-bisphosphate aldolase activity"/>
    <property type="evidence" value="ECO:0007669"/>
    <property type="project" value="UniProtKB-EC"/>
</dbReference>
<dbReference type="GO" id="GO:0008270">
    <property type="term" value="F:zinc ion binding"/>
    <property type="evidence" value="ECO:0007669"/>
    <property type="project" value="InterPro"/>
</dbReference>
<dbReference type="GO" id="GO:0006096">
    <property type="term" value="P:glycolytic process"/>
    <property type="evidence" value="ECO:0007669"/>
    <property type="project" value="UniProtKB-UniPathway"/>
</dbReference>
<dbReference type="GO" id="GO:0019253">
    <property type="term" value="P:reductive pentose-phosphate cycle"/>
    <property type="evidence" value="ECO:0007669"/>
    <property type="project" value="UniProtKB-UniPathway"/>
</dbReference>
<dbReference type="CDD" id="cd00947">
    <property type="entry name" value="TBP_aldolase_IIB"/>
    <property type="match status" value="1"/>
</dbReference>
<dbReference type="FunFam" id="3.20.20.70:FF:000111">
    <property type="entry name" value="Fructose-1,6-bisphosphate aldolase"/>
    <property type="match status" value="1"/>
</dbReference>
<dbReference type="Gene3D" id="3.20.20.70">
    <property type="entry name" value="Aldolase class I"/>
    <property type="match status" value="1"/>
</dbReference>
<dbReference type="InterPro" id="IPR013785">
    <property type="entry name" value="Aldolase_TIM"/>
</dbReference>
<dbReference type="InterPro" id="IPR050246">
    <property type="entry name" value="Class_II_FBP_aldolase"/>
</dbReference>
<dbReference type="InterPro" id="IPR000771">
    <property type="entry name" value="FBA_II"/>
</dbReference>
<dbReference type="InterPro" id="IPR006412">
    <property type="entry name" value="Fruct_bisP_Calv"/>
</dbReference>
<dbReference type="NCBIfam" id="TIGR00167">
    <property type="entry name" value="cbbA"/>
    <property type="match status" value="1"/>
</dbReference>
<dbReference type="NCBIfam" id="TIGR01521">
    <property type="entry name" value="FruBisAldo_II_B"/>
    <property type="match status" value="1"/>
</dbReference>
<dbReference type="PANTHER" id="PTHR30304">
    <property type="entry name" value="D-TAGATOSE-1,6-BISPHOSPHATE ALDOLASE"/>
    <property type="match status" value="1"/>
</dbReference>
<dbReference type="PANTHER" id="PTHR30304:SF0">
    <property type="entry name" value="D-TAGATOSE-1,6-BISPHOSPHATE ALDOLASE SUBUNIT GATY-RELATED"/>
    <property type="match status" value="1"/>
</dbReference>
<dbReference type="Pfam" id="PF01116">
    <property type="entry name" value="F_bP_aldolase"/>
    <property type="match status" value="1"/>
</dbReference>
<dbReference type="PIRSF" id="PIRSF001359">
    <property type="entry name" value="F_bP_aldolase_II"/>
    <property type="match status" value="1"/>
</dbReference>
<dbReference type="SUPFAM" id="SSF51569">
    <property type="entry name" value="Aldolase"/>
    <property type="match status" value="1"/>
</dbReference>
<dbReference type="PROSITE" id="PS00602">
    <property type="entry name" value="ALDOLASE_CLASS_II_1"/>
    <property type="match status" value="1"/>
</dbReference>
<dbReference type="PROSITE" id="PS00806">
    <property type="entry name" value="ALDOLASE_CLASS_II_2"/>
    <property type="match status" value="1"/>
</dbReference>
<accession>P56888</accession>
<accession>A6UGF3</accession>
<sequence>MARITLRQLLDHAAERSYGVPAFNINNMEQGLAIMEAARACDAPVILQVSRGARSYANDIMLAKMMEALEVMYPDIPLCIHQDHGNNVATCLTAIQHGFTSVMMDGSLKEDAKTPADYAYNAMITTEVSRLAHMVGASVEGELGCLGSLETGHGEAEDGHGFEGALDRSQLLTDPDEAARFVAETGVDALAVAIGTSHGAYKFTRKPTGEVLAMDVIEKIHERLPDTHIVMHGSSSVPQEWQDVFNAHGGEMRETYGVPVEEIVRGIRFGVRKVNIDTDLRLAAAAAFRRVADTSRTEFDPRKFLKPAMDAMSAVCKARFEAFGTAGNASRIKVVPMAEMARRYASGSLKPQAKRAEAA</sequence>
<feature type="chain" id="PRO_0000178730" description="Fructose-bisphosphate aldolase">
    <location>
        <begin position="1"/>
        <end position="359"/>
    </location>
</feature>
<feature type="active site" description="Proton donor" evidence="1">
    <location>
        <position position="83"/>
    </location>
</feature>
<feature type="binding site" evidence="1">
    <location>
        <position position="50"/>
    </location>
    <ligand>
        <name>D-glyceraldehyde 3-phosphate</name>
        <dbReference type="ChEBI" id="CHEBI:59776"/>
    </ligand>
</feature>
<feature type="binding site" evidence="1">
    <location>
        <position position="84"/>
    </location>
    <ligand>
        <name>Zn(2+)</name>
        <dbReference type="ChEBI" id="CHEBI:29105"/>
        <label>1</label>
        <note>catalytic</note>
    </ligand>
</feature>
<feature type="binding site" evidence="1">
    <location>
        <position position="105"/>
    </location>
    <ligand>
        <name>Zn(2+)</name>
        <dbReference type="ChEBI" id="CHEBI:29105"/>
        <label>2</label>
    </ligand>
</feature>
<feature type="binding site" evidence="1">
    <location>
        <position position="142"/>
    </location>
    <ligand>
        <name>Zn(2+)</name>
        <dbReference type="ChEBI" id="CHEBI:29105"/>
        <label>2</label>
    </ligand>
</feature>
<feature type="binding site" evidence="1">
    <location>
        <position position="198"/>
    </location>
    <ligand>
        <name>Zn(2+)</name>
        <dbReference type="ChEBI" id="CHEBI:29105"/>
        <label>1</label>
        <note>catalytic</note>
    </ligand>
</feature>
<feature type="binding site" evidence="1">
    <location>
        <position position="199"/>
    </location>
    <ligand>
        <name>dihydroxyacetone phosphate</name>
        <dbReference type="ChEBI" id="CHEBI:57642"/>
    </ligand>
</feature>
<feature type="binding site" evidence="1">
    <location>
        <position position="232"/>
    </location>
    <ligand>
        <name>Zn(2+)</name>
        <dbReference type="ChEBI" id="CHEBI:29105"/>
        <label>1</label>
        <note>catalytic</note>
    </ligand>
</feature>
<feature type="binding site" evidence="1">
    <location>
        <begin position="233"/>
        <end position="235"/>
    </location>
    <ligand>
        <name>dihydroxyacetone phosphate</name>
        <dbReference type="ChEBI" id="CHEBI:57642"/>
    </ligand>
</feature>
<feature type="binding site" evidence="1">
    <location>
        <begin position="275"/>
        <end position="278"/>
    </location>
    <ligand>
        <name>dihydroxyacetone phosphate</name>
        <dbReference type="ChEBI" id="CHEBI:57642"/>
    </ligand>
</feature>
<feature type="sequence conflict" description="In Ref. 1; AAF25378." evidence="2" ref="1">
    <original>AT</original>
    <variation>PN</variation>
    <location>
        <begin position="89"/>
        <end position="90"/>
    </location>
</feature>
<protein>
    <recommendedName>
        <fullName>Fructose-bisphosphate aldolase</fullName>
        <shortName>FBP aldolase</shortName>
        <shortName>FBPA</shortName>
        <ecNumber>4.1.2.13</ecNumber>
    </recommendedName>
    <alternativeName>
        <fullName>Fructose-1,6-bisphosphate aldolase</fullName>
    </alternativeName>
</protein>
<name>ALF_SINMW</name>